<organism>
    <name type="scientific">Bacillus subtilis (strain 168)</name>
    <dbReference type="NCBI Taxonomy" id="224308"/>
    <lineage>
        <taxon>Bacteria</taxon>
        <taxon>Bacillati</taxon>
        <taxon>Bacillota</taxon>
        <taxon>Bacilli</taxon>
        <taxon>Bacillales</taxon>
        <taxon>Bacillaceae</taxon>
        <taxon>Bacillus</taxon>
    </lineage>
</organism>
<proteinExistence type="evidence at protein level"/>
<keyword id="KW-0002">3D-structure</keyword>
<keyword id="KW-0106">Calcium</keyword>
<keyword id="KW-0119">Carbohydrate metabolism</keyword>
<keyword id="KW-0326">Glycosidase</keyword>
<keyword id="KW-0378">Hydrolase</keyword>
<keyword id="KW-0479">Metal-binding</keyword>
<keyword id="KW-1185">Reference proteome</keyword>
<keyword id="KW-0964">Secreted</keyword>
<keyword id="KW-0732">Signal</keyword>
<evidence type="ECO:0000250" key="1">
    <source>
        <dbReference type="UniProtKB" id="P06278"/>
    </source>
</evidence>
<evidence type="ECO:0000269" key="2">
    <source>
    </source>
</evidence>
<evidence type="ECO:0000305" key="3"/>
<evidence type="ECO:0000305" key="4">
    <source>
    </source>
</evidence>
<evidence type="ECO:0007829" key="5">
    <source>
        <dbReference type="PDB" id="1BAG"/>
    </source>
</evidence>
<evidence type="ECO:0007829" key="6">
    <source>
        <dbReference type="PDB" id="1UA7"/>
    </source>
</evidence>
<name>AMY_BACSU</name>
<dbReference type="EC" id="3.2.1.1" evidence="1"/>
<dbReference type="EMBL" id="V00101">
    <property type="protein sequence ID" value="CAA23437.1"/>
    <property type="molecule type" value="Genomic_DNA"/>
</dbReference>
<dbReference type="EMBL" id="V00100">
    <property type="protein sequence ID" value="CAA23436.1"/>
    <property type="molecule type" value="Genomic_DNA"/>
</dbReference>
<dbReference type="EMBL" id="D50453">
    <property type="protein sequence ID" value="BAA08938.1"/>
    <property type="molecule type" value="Genomic_DNA"/>
</dbReference>
<dbReference type="EMBL" id="AL009126">
    <property type="protein sequence ID" value="CAB12098.2"/>
    <property type="molecule type" value="Genomic_DNA"/>
</dbReference>
<dbReference type="EMBL" id="K00563">
    <property type="protein sequence ID" value="AAA22234.1"/>
    <property type="molecule type" value="Genomic_DNA"/>
</dbReference>
<dbReference type="EMBL" id="X02150">
    <property type="protein sequence ID" value="CAA26086.1"/>
    <property type="molecule type" value="Genomic_DNA"/>
</dbReference>
<dbReference type="EMBL" id="M35517">
    <property type="protein sequence ID" value="AAA22230.1"/>
    <property type="molecule type" value="Genomic_DNA"/>
</dbReference>
<dbReference type="PIR" id="A00842">
    <property type="entry name" value="ALBS"/>
</dbReference>
<dbReference type="PIR" id="A91793">
    <property type="entry name" value="ALBSNA"/>
</dbReference>
<dbReference type="RefSeq" id="NP_388186.2">
    <property type="nucleotide sequence ID" value="NC_000964.3"/>
</dbReference>
<dbReference type="RefSeq" id="WP_003234692.1">
    <property type="nucleotide sequence ID" value="NZ_OZ025638.1"/>
</dbReference>
<dbReference type="PDB" id="1BAG">
    <property type="method" value="X-ray"/>
    <property type="resolution" value="2.50 A"/>
    <property type="chains" value="A=42-466"/>
</dbReference>
<dbReference type="PDB" id="1UA7">
    <property type="method" value="X-ray"/>
    <property type="resolution" value="2.21 A"/>
    <property type="chains" value="A=45-466"/>
</dbReference>
<dbReference type="PDBsum" id="1BAG"/>
<dbReference type="PDBsum" id="1UA7"/>
<dbReference type="SMR" id="P00691"/>
<dbReference type="FunCoup" id="P00691">
    <property type="interactions" value="77"/>
</dbReference>
<dbReference type="STRING" id="224308.BSU03040"/>
<dbReference type="BindingDB" id="P00691"/>
<dbReference type="ChEMBL" id="CHEMBL3739249"/>
<dbReference type="DrugBank" id="DB01841">
    <property type="generic name" value="4,6-Dideoxyglucose"/>
</dbReference>
<dbReference type="DrugBank" id="DB02120">
    <property type="generic name" value="6-Amino-4-Hydroxymethyl-Cyclohex-4-Ene-1,2,3-Triol"/>
</dbReference>
<dbReference type="DrugBank" id="DB02379">
    <property type="generic name" value="Beta-D-Glucose"/>
</dbReference>
<dbReference type="CAZy" id="CBM26">
    <property type="family name" value="Carbohydrate-Binding Module Family 26"/>
</dbReference>
<dbReference type="CAZy" id="GH13">
    <property type="family name" value="Glycoside Hydrolase Family 13"/>
</dbReference>
<dbReference type="PaxDb" id="224308-BSU03040"/>
<dbReference type="EnsemblBacteria" id="CAB12098">
    <property type="protein sequence ID" value="CAB12098"/>
    <property type="gene ID" value="BSU_03040"/>
</dbReference>
<dbReference type="GeneID" id="938356"/>
<dbReference type="KEGG" id="bsu:BSU03040"/>
<dbReference type="PATRIC" id="fig|224308.179.peg.317"/>
<dbReference type="eggNOG" id="COG0366">
    <property type="taxonomic scope" value="Bacteria"/>
</dbReference>
<dbReference type="InParanoid" id="P00691"/>
<dbReference type="OrthoDB" id="9805159at2"/>
<dbReference type="BioCyc" id="BSUB:BSU03040-MONOMER"/>
<dbReference type="SABIO-RK" id="P00691"/>
<dbReference type="EvolutionaryTrace" id="P00691"/>
<dbReference type="Proteomes" id="UP000001570">
    <property type="component" value="Chromosome"/>
</dbReference>
<dbReference type="GO" id="GO:0005576">
    <property type="term" value="C:extracellular region"/>
    <property type="evidence" value="ECO:0007669"/>
    <property type="project" value="UniProtKB-SubCell"/>
</dbReference>
<dbReference type="GO" id="GO:0004556">
    <property type="term" value="F:alpha-amylase activity"/>
    <property type="evidence" value="ECO:0007669"/>
    <property type="project" value="UniProtKB-EC"/>
</dbReference>
<dbReference type="GO" id="GO:0046872">
    <property type="term" value="F:metal ion binding"/>
    <property type="evidence" value="ECO:0007669"/>
    <property type="project" value="UniProtKB-KW"/>
</dbReference>
<dbReference type="GO" id="GO:0005975">
    <property type="term" value="P:carbohydrate metabolic process"/>
    <property type="evidence" value="ECO:0007669"/>
    <property type="project" value="InterPro"/>
</dbReference>
<dbReference type="CDD" id="cd11315">
    <property type="entry name" value="AmyAc_bac1_AmyA"/>
    <property type="match status" value="1"/>
</dbReference>
<dbReference type="Gene3D" id="3.20.20.80">
    <property type="entry name" value="Glycosidases"/>
    <property type="match status" value="1"/>
</dbReference>
<dbReference type="Gene3D" id="2.60.40.1180">
    <property type="entry name" value="Golgi alpha-mannosidase II"/>
    <property type="match status" value="1"/>
</dbReference>
<dbReference type="Gene3D" id="2.60.40.10">
    <property type="entry name" value="Immunoglobulins"/>
    <property type="match status" value="1"/>
</dbReference>
<dbReference type="InterPro" id="IPR006048">
    <property type="entry name" value="A-amylase/branching_C"/>
</dbReference>
<dbReference type="InterPro" id="IPR031319">
    <property type="entry name" value="A-amylase_C"/>
</dbReference>
<dbReference type="InterPro" id="IPR006046">
    <property type="entry name" value="Alpha_amylase"/>
</dbReference>
<dbReference type="InterPro" id="IPR031965">
    <property type="entry name" value="CBM26"/>
</dbReference>
<dbReference type="InterPro" id="IPR006047">
    <property type="entry name" value="Glyco_hydro_13_cat_dom"/>
</dbReference>
<dbReference type="InterPro" id="IPR013780">
    <property type="entry name" value="Glyco_hydro_b"/>
</dbReference>
<dbReference type="InterPro" id="IPR017853">
    <property type="entry name" value="Glycoside_hydrolase_SF"/>
</dbReference>
<dbReference type="InterPro" id="IPR013783">
    <property type="entry name" value="Ig-like_fold"/>
</dbReference>
<dbReference type="PANTHER" id="PTHR43447">
    <property type="entry name" value="ALPHA-AMYLASE"/>
    <property type="match status" value="1"/>
</dbReference>
<dbReference type="Pfam" id="PF00128">
    <property type="entry name" value="Alpha-amylase"/>
    <property type="match status" value="1"/>
</dbReference>
<dbReference type="Pfam" id="PF02806">
    <property type="entry name" value="Alpha-amylase_C"/>
    <property type="match status" value="1"/>
</dbReference>
<dbReference type="Pfam" id="PF16738">
    <property type="entry name" value="CBM26"/>
    <property type="match status" value="1"/>
</dbReference>
<dbReference type="PRINTS" id="PR00110">
    <property type="entry name" value="ALPHAAMYLASE"/>
</dbReference>
<dbReference type="SMART" id="SM00642">
    <property type="entry name" value="Aamy"/>
    <property type="match status" value="1"/>
</dbReference>
<dbReference type="SMART" id="SM00632">
    <property type="entry name" value="Aamy_C"/>
    <property type="match status" value="1"/>
</dbReference>
<dbReference type="SUPFAM" id="SSF51445">
    <property type="entry name" value="(Trans)glycosidases"/>
    <property type="match status" value="1"/>
</dbReference>
<dbReference type="SUPFAM" id="SSF51011">
    <property type="entry name" value="Glycosyl hydrolase domain"/>
    <property type="match status" value="1"/>
</dbReference>
<reference key="1">
    <citation type="journal article" date="1983" name="Nucleic Acids Res.">
        <title>Nucleotide sequence of the amylase gene from Bacillus subtilis.</title>
        <authorList>
            <person name="Yang M."/>
            <person name="Galizzi A."/>
            <person name="Henner D.J."/>
        </authorList>
    </citation>
    <scope>NUCLEOTIDE SEQUENCE [GENOMIC DNA]</scope>
    <source>
        <strain>168</strain>
    </source>
</reference>
<reference key="2">
    <citation type="journal article" date="1984" name="J. Biochem.">
        <title>Changes in the properties and molecular weights of Bacillus subtilis M-type and N-type alpha-amylases resulting from a spontaneous deletion.</title>
        <authorList>
            <person name="Yamane K."/>
            <person name="Hirata Y."/>
            <person name="Furusato T."/>
            <person name="Yamazaki H."/>
            <person name="Nakayama A."/>
        </authorList>
    </citation>
    <scope>NUCLEOTIDE SEQUENCE [GENOMIC DNA]</scope>
    <source>
        <strain>N7 AMYEN+</strain>
    </source>
</reference>
<reference key="3">
    <citation type="journal article" date="1996" name="Microbiology">
        <title>The 25 degrees-36 degrees region of the Bacillus subtilis chromosome: determination of the sequence of a 146 kb segment and identification of 113 genes.</title>
        <authorList>
            <person name="Yamane K."/>
            <person name="Kumano M."/>
            <person name="Kurita K."/>
        </authorList>
    </citation>
    <scope>NUCLEOTIDE SEQUENCE [GENOMIC DNA]</scope>
    <source>
        <strain>168</strain>
    </source>
</reference>
<reference key="4">
    <citation type="journal article" date="1997" name="Nature">
        <title>The complete genome sequence of the Gram-positive bacterium Bacillus subtilis.</title>
        <authorList>
            <person name="Kunst F."/>
            <person name="Ogasawara N."/>
            <person name="Moszer I."/>
            <person name="Albertini A.M."/>
            <person name="Alloni G."/>
            <person name="Azevedo V."/>
            <person name="Bertero M.G."/>
            <person name="Bessieres P."/>
            <person name="Bolotin A."/>
            <person name="Borchert S."/>
            <person name="Borriss R."/>
            <person name="Boursier L."/>
            <person name="Brans A."/>
            <person name="Braun M."/>
            <person name="Brignell S.C."/>
            <person name="Bron S."/>
            <person name="Brouillet S."/>
            <person name="Bruschi C.V."/>
            <person name="Caldwell B."/>
            <person name="Capuano V."/>
            <person name="Carter N.M."/>
            <person name="Choi S.-K."/>
            <person name="Codani J.-J."/>
            <person name="Connerton I.F."/>
            <person name="Cummings N.J."/>
            <person name="Daniel R.A."/>
            <person name="Denizot F."/>
            <person name="Devine K.M."/>
            <person name="Duesterhoeft A."/>
            <person name="Ehrlich S.D."/>
            <person name="Emmerson P.T."/>
            <person name="Entian K.-D."/>
            <person name="Errington J."/>
            <person name="Fabret C."/>
            <person name="Ferrari E."/>
            <person name="Foulger D."/>
            <person name="Fritz C."/>
            <person name="Fujita M."/>
            <person name="Fujita Y."/>
            <person name="Fuma S."/>
            <person name="Galizzi A."/>
            <person name="Galleron N."/>
            <person name="Ghim S.-Y."/>
            <person name="Glaser P."/>
            <person name="Goffeau A."/>
            <person name="Golightly E.J."/>
            <person name="Grandi G."/>
            <person name="Guiseppi G."/>
            <person name="Guy B.J."/>
            <person name="Haga K."/>
            <person name="Haiech J."/>
            <person name="Harwood C.R."/>
            <person name="Henaut A."/>
            <person name="Hilbert H."/>
            <person name="Holsappel S."/>
            <person name="Hosono S."/>
            <person name="Hullo M.-F."/>
            <person name="Itaya M."/>
            <person name="Jones L.-M."/>
            <person name="Joris B."/>
            <person name="Karamata D."/>
            <person name="Kasahara Y."/>
            <person name="Klaerr-Blanchard M."/>
            <person name="Klein C."/>
            <person name="Kobayashi Y."/>
            <person name="Koetter P."/>
            <person name="Koningstein G."/>
            <person name="Krogh S."/>
            <person name="Kumano M."/>
            <person name="Kurita K."/>
            <person name="Lapidus A."/>
            <person name="Lardinois S."/>
            <person name="Lauber J."/>
            <person name="Lazarevic V."/>
            <person name="Lee S.-M."/>
            <person name="Levine A."/>
            <person name="Liu H."/>
            <person name="Masuda S."/>
            <person name="Mauel C."/>
            <person name="Medigue C."/>
            <person name="Medina N."/>
            <person name="Mellado R.P."/>
            <person name="Mizuno M."/>
            <person name="Moestl D."/>
            <person name="Nakai S."/>
            <person name="Noback M."/>
            <person name="Noone D."/>
            <person name="O'Reilly M."/>
            <person name="Ogawa K."/>
            <person name="Ogiwara A."/>
            <person name="Oudega B."/>
            <person name="Park S.-H."/>
            <person name="Parro V."/>
            <person name="Pohl T.M."/>
            <person name="Portetelle D."/>
            <person name="Porwollik S."/>
            <person name="Prescott A.M."/>
            <person name="Presecan E."/>
            <person name="Pujic P."/>
            <person name="Purnelle B."/>
            <person name="Rapoport G."/>
            <person name="Rey M."/>
            <person name="Reynolds S."/>
            <person name="Rieger M."/>
            <person name="Rivolta C."/>
            <person name="Rocha E."/>
            <person name="Roche B."/>
            <person name="Rose M."/>
            <person name="Sadaie Y."/>
            <person name="Sato T."/>
            <person name="Scanlan E."/>
            <person name="Schleich S."/>
            <person name="Schroeter R."/>
            <person name="Scoffone F."/>
            <person name="Sekiguchi J."/>
            <person name="Sekowska A."/>
            <person name="Seror S.J."/>
            <person name="Serror P."/>
            <person name="Shin B.-S."/>
            <person name="Soldo B."/>
            <person name="Sorokin A."/>
            <person name="Tacconi E."/>
            <person name="Takagi T."/>
            <person name="Takahashi H."/>
            <person name="Takemaru K."/>
            <person name="Takeuchi M."/>
            <person name="Tamakoshi A."/>
            <person name="Tanaka T."/>
            <person name="Terpstra P."/>
            <person name="Tognoni A."/>
            <person name="Tosato V."/>
            <person name="Uchiyama S."/>
            <person name="Vandenbol M."/>
            <person name="Vannier F."/>
            <person name="Vassarotti A."/>
            <person name="Viari A."/>
            <person name="Wambutt R."/>
            <person name="Wedler E."/>
            <person name="Wedler H."/>
            <person name="Weitzenegger T."/>
            <person name="Winters P."/>
            <person name="Wipat A."/>
            <person name="Yamamoto H."/>
            <person name="Yamane K."/>
            <person name="Yasumoto K."/>
            <person name="Yata K."/>
            <person name="Yoshida K."/>
            <person name="Yoshikawa H.-F."/>
            <person name="Zumstein E."/>
            <person name="Yoshikawa H."/>
            <person name="Danchin A."/>
        </authorList>
    </citation>
    <scope>NUCLEOTIDE SEQUENCE [LARGE SCALE GENOMIC DNA]</scope>
    <source>
        <strain>168</strain>
    </source>
</reference>
<reference key="5">
    <citation type="journal article" date="2009" name="Microbiology">
        <title>From a consortium sequence to a unified sequence: the Bacillus subtilis 168 reference genome a decade later.</title>
        <authorList>
            <person name="Barbe V."/>
            <person name="Cruveiller S."/>
            <person name="Kunst F."/>
            <person name="Lenoble P."/>
            <person name="Meurice G."/>
            <person name="Sekowska A."/>
            <person name="Vallenet D."/>
            <person name="Wang T."/>
            <person name="Moszer I."/>
            <person name="Medigue C."/>
            <person name="Danchin A."/>
        </authorList>
    </citation>
    <scope>SEQUENCE REVISION TO 513-529</scope>
</reference>
<reference key="6">
    <citation type="journal article" date="1983" name="J. Bacteriol.">
        <title>Alpha-amylase genes (amyR2 and amyE+) from an alpha-amylase-hyperproducing Bacillus subtilis strain: molecular cloning and nucleotide sequences.</title>
        <authorList>
            <person name="Yamazaki H."/>
            <person name="Ohmura K."/>
            <person name="Nakayama A."/>
            <person name="Takeichi Y."/>
            <person name="Otozai K."/>
            <person name="Yamasaki M."/>
            <person name="Tamura G."/>
            <person name="Yamane K."/>
        </authorList>
    </citation>
    <scope>NUCLEOTIDE SEQUENCE [GENOMIC DNA] OF 1-557</scope>
</reference>
<reference key="7">
    <citation type="journal article" date="1983" name="Biochem. Biophys. Res. Commun.">
        <title>Nucleotide sequence of the promoter and NH2-terminal signal peptide region of Bacillus subtilis alpha-amylase gene cloned in pUB110.</title>
        <authorList>
            <person name="Ohmura K."/>
            <person name="Yamazaki H."/>
            <person name="Takeichi Y."/>
            <person name="Nakayama A."/>
            <person name="Otozai K."/>
            <person name="Yamane K."/>
            <person name="Yamasaki M."/>
            <person name="Tamura G."/>
        </authorList>
    </citation>
    <scope>NUCLEOTIDE SEQUENCE [GENOMIC DNA] OF 1-66</scope>
</reference>
<reference key="8">
    <citation type="journal article" date="1988" name="Agric. Biol. Chem.">
        <title>Molecular cloning and expression of an alpha-amylase gene from an alpha-amylase extrahyper producing Bacillus subtilis.</title>
        <authorList>
            <person name="Emori M."/>
            <person name="Tojo T."/>
            <person name="Maruo B."/>
        </authorList>
    </citation>
    <scope>NUCLEOTIDE SEQUENCE [GENOMIC DNA] OF 1-43</scope>
    <source>
        <strain>168 / 2633</strain>
    </source>
</reference>
<reference key="9">
    <citation type="journal article" date="1979" name="J. Biol. Chem.">
        <title>Membrane-bound and soluble extracellular alpha-amylase from Bacillus subtilis.</title>
        <authorList>
            <person name="Mantsala P."/>
            <person name="Zalkin H."/>
        </authorList>
    </citation>
    <scope>NUCLEOTIDE SEQUENCE [GENOMIC DNA] OF 42-58</scope>
</reference>
<reference key="10">
    <citation type="journal article" date="1998" name="J. Mol. Biol.">
        <title>Crystal structure of a catalytic-site mutant alpha-amylase from Bacillus subtilis complexed with maltopentaose.</title>
        <authorList>
            <person name="Fujimoto Z."/>
            <person name="Takase K."/>
            <person name="Doui N."/>
            <person name="Momma M."/>
            <person name="Matsumoto T."/>
            <person name="Mizuno H."/>
        </authorList>
    </citation>
    <scope>X-RAY CRYSTALLOGRAPHY (2.50 ANGSTROMS) OF 42-466 IN COMPLEX WITH CALCIUM AND MALTOPENTAOSE</scope>
    <scope>COFACTOR</scope>
</reference>
<protein>
    <recommendedName>
        <fullName>Alpha-amylase</fullName>
        <ecNumber evidence="1">3.2.1.1</ecNumber>
    </recommendedName>
    <alternativeName>
        <fullName>1,4-alpha-D-glucan glucanohydrolase</fullName>
    </alternativeName>
</protein>
<feature type="signal peptide">
    <location>
        <begin position="1"/>
        <end position="27"/>
    </location>
</feature>
<feature type="propeptide" id="PRO_0000001335">
    <location>
        <begin position="28"/>
        <end position="41"/>
    </location>
</feature>
<feature type="chain" id="PRO_0000001336" description="Alpha-amylase">
    <location>
        <begin position="42"/>
        <end position="659"/>
    </location>
</feature>
<feature type="active site" description="Nucleophile" evidence="4">
    <location>
        <position position="217"/>
    </location>
</feature>
<feature type="active site" description="Proton donor" evidence="4">
    <location>
        <position position="249"/>
    </location>
</feature>
<feature type="binding site" evidence="2">
    <location>
        <position position="142"/>
    </location>
    <ligand>
        <name>Ca(2+)</name>
        <dbReference type="ChEBI" id="CHEBI:29108"/>
        <label>1</label>
    </ligand>
</feature>
<feature type="binding site" evidence="2">
    <location>
        <position position="178"/>
    </location>
    <ligand>
        <name>Ca(2+)</name>
        <dbReference type="ChEBI" id="CHEBI:29108"/>
        <label>1</label>
    </ligand>
</feature>
<feature type="binding site" evidence="2">
    <location>
        <position position="187"/>
    </location>
    <ligand>
        <name>Ca(2+)</name>
        <dbReference type="ChEBI" id="CHEBI:29108"/>
        <label>1</label>
    </ligand>
</feature>
<feature type="binding site" evidence="2">
    <location>
        <position position="210"/>
    </location>
    <ligand>
        <name>Ca(2+)</name>
        <dbReference type="ChEBI" id="CHEBI:29108"/>
        <label>2</label>
    </ligand>
</feature>
<feature type="binding site" evidence="2">
    <location>
        <position position="212"/>
    </location>
    <ligand>
        <name>Ca(2+)</name>
        <dbReference type="ChEBI" id="CHEBI:29108"/>
        <label>2</label>
    </ligand>
</feature>
<feature type="binding site" evidence="2">
    <location>
        <position position="221"/>
    </location>
    <ligand>
        <name>Ca(2+)</name>
        <dbReference type="ChEBI" id="CHEBI:29108"/>
        <label>1</label>
    </ligand>
</feature>
<feature type="site" description="Transition state stabilizer" evidence="4">
    <location>
        <position position="310"/>
    </location>
</feature>
<feature type="sequence variant" description="In strain: N7 AMYEN+.">
    <original>AKAPHVFLE</original>
    <variation>EMRCNTFFQ</variation>
    <location>
        <begin position="469"/>
        <end position="477"/>
    </location>
</feature>
<feature type="sequence variant" description="In strain: N7 AMYEN+.">
    <location>
        <begin position="478"/>
        <end position="659"/>
    </location>
</feature>
<feature type="sequence conflict" description="In Ref. 2; CAA26086, 6; AAA22234, 7; CAA23436 and 8; AAA22230." evidence="3" ref="2 6 7 8">
    <original>H</original>
    <variation>Y</variation>
    <location>
        <position position="22"/>
    </location>
</feature>
<feature type="sequence conflict" description="In Ref. 2; CAA26086 and 6; AAA22234." evidence="3" ref="2 6">
    <original>S</original>
    <variation>F</variation>
    <location>
        <position position="146"/>
    </location>
</feature>
<feature type="sequence conflict" description="In Ref. 2; CAA26086 and 6; AAA22234." evidence="3" ref="2 6">
    <original>D</original>
    <variation>E</variation>
    <location>
        <position position="204"/>
    </location>
</feature>
<feature type="sequence conflict" description="In Ref. 2; CAA26086." evidence="3" ref="2">
    <original>N</original>
    <variation>K</variation>
    <location>
        <position position="284"/>
    </location>
</feature>
<feature type="sequence conflict" description="In Ref. 6; AAA22234." evidence="3" ref="6">
    <original>A</original>
    <variation>S</variation>
    <location>
        <position position="332"/>
    </location>
</feature>
<feature type="sequence conflict" description="In Ref. 1; CAA23437 and 3; BAA08938." evidence="3" ref="1 3">
    <original>ETAFKDGDQFTIGKGDP</original>
    <variation>DDRRLRMEINSQSEKEIQ</variation>
    <location>
        <begin position="513"/>
        <end position="529"/>
    </location>
</feature>
<feature type="turn" evidence="6">
    <location>
        <begin position="47"/>
        <end position="49"/>
    </location>
</feature>
<feature type="strand" evidence="6">
    <location>
        <begin position="52"/>
        <end position="54"/>
    </location>
</feature>
<feature type="helix" evidence="6">
    <location>
        <begin position="60"/>
        <end position="65"/>
    </location>
</feature>
<feature type="helix" evidence="6">
    <location>
        <begin position="67"/>
        <end position="72"/>
    </location>
</feature>
<feature type="strand" evidence="6">
    <location>
        <begin position="76"/>
        <end position="80"/>
    </location>
</feature>
<feature type="strand" evidence="6">
    <location>
        <begin position="84"/>
        <end position="86"/>
    </location>
</feature>
<feature type="helix" evidence="6">
    <location>
        <begin position="90"/>
        <end position="92"/>
    </location>
</feature>
<feature type="helix" evidence="6">
    <location>
        <begin position="96"/>
        <end position="103"/>
    </location>
</feature>
<feature type="strand" evidence="6">
    <location>
        <begin position="105"/>
        <end position="112"/>
    </location>
</feature>
<feature type="turn" evidence="6">
    <location>
        <begin position="113"/>
        <end position="115"/>
    </location>
</feature>
<feature type="helix" evidence="6">
    <location>
        <begin position="118"/>
        <end position="129"/>
    </location>
</feature>
<feature type="turn" evidence="6">
    <location>
        <begin position="130"/>
        <end position="132"/>
    </location>
</feature>
<feature type="strand" evidence="6">
    <location>
        <begin position="134"/>
        <end position="139"/>
    </location>
</feature>
<feature type="turn" evidence="6">
    <location>
        <begin position="148"/>
        <end position="150"/>
    </location>
</feature>
<feature type="helix" evidence="6">
    <location>
        <begin position="153"/>
        <end position="156"/>
    </location>
</feature>
<feature type="strand" evidence="6">
    <location>
        <begin position="162"/>
        <end position="164"/>
    </location>
</feature>
<feature type="helix" evidence="6">
    <location>
        <begin position="174"/>
        <end position="179"/>
    </location>
</feature>
<feature type="strand" evidence="6">
    <location>
        <begin position="180"/>
        <end position="182"/>
    </location>
</feature>
<feature type="helix" evidence="6">
    <location>
        <begin position="193"/>
        <end position="208"/>
    </location>
</feature>
<feature type="strand" evidence="6">
    <location>
        <begin position="213"/>
        <end position="216"/>
    </location>
</feature>
<feature type="helix" evidence="6">
    <location>
        <begin position="219"/>
        <end position="221"/>
    </location>
</feature>
<feature type="helix" evidence="6">
    <location>
        <begin position="228"/>
        <end position="230"/>
    </location>
</feature>
<feature type="helix" evidence="6">
    <location>
        <begin position="234"/>
        <end position="238"/>
    </location>
</feature>
<feature type="strand" evidence="6">
    <location>
        <begin position="244"/>
        <end position="248"/>
    </location>
</feature>
<feature type="helix" evidence="6">
    <location>
        <begin position="258"/>
        <end position="262"/>
    </location>
</feature>
<feature type="strand" evidence="6">
    <location>
        <begin position="265"/>
        <end position="268"/>
    </location>
</feature>
<feature type="helix" evidence="6">
    <location>
        <begin position="270"/>
        <end position="282"/>
    </location>
</feature>
<feature type="helix" evidence="6">
    <location>
        <begin position="287"/>
        <end position="290"/>
    </location>
</feature>
<feature type="strand" evidence="6">
    <location>
        <begin position="294"/>
        <end position="297"/>
    </location>
</feature>
<feature type="helix" evidence="6">
    <location>
        <begin position="299"/>
        <end position="301"/>
    </location>
</feature>
<feature type="strand" evidence="6">
    <location>
        <begin position="302"/>
        <end position="304"/>
    </location>
</feature>
<feature type="helix" evidence="6">
    <location>
        <begin position="309"/>
        <end position="313"/>
    </location>
</feature>
<feature type="turn" evidence="5">
    <location>
        <begin position="318"/>
        <end position="321"/>
    </location>
</feature>
<feature type="helix" evidence="6">
    <location>
        <begin position="324"/>
        <end position="335"/>
    </location>
</feature>
<feature type="strand" evidence="6">
    <location>
        <begin position="337"/>
        <end position="345"/>
    </location>
</feature>
<feature type="strand" evidence="5">
    <location>
        <begin position="359"/>
        <end position="361"/>
    </location>
</feature>
<feature type="helix" evidence="6">
    <location>
        <begin position="369"/>
        <end position="372"/>
    </location>
</feature>
<feature type="helix" evidence="6">
    <location>
        <begin position="374"/>
        <end position="386"/>
    </location>
</feature>
<feature type="helix" evidence="6">
    <location>
        <begin position="396"/>
        <end position="398"/>
    </location>
</feature>
<feature type="strand" evidence="6">
    <location>
        <begin position="402"/>
        <end position="407"/>
    </location>
</feature>
<feature type="turn" evidence="6">
    <location>
        <begin position="408"/>
        <end position="410"/>
    </location>
</feature>
<feature type="strand" evidence="6">
    <location>
        <begin position="411"/>
        <end position="416"/>
    </location>
</feature>
<feature type="strand" evidence="6">
    <location>
        <begin position="418"/>
        <end position="420"/>
    </location>
</feature>
<feature type="strand" evidence="6">
    <location>
        <begin position="422"/>
        <end position="427"/>
    </location>
</feature>
<feature type="strand" evidence="6">
    <location>
        <begin position="432"/>
        <end position="436"/>
    </location>
</feature>
<feature type="strand" evidence="5">
    <location>
        <begin position="438"/>
        <end position="441"/>
    </location>
</feature>
<feature type="strand" evidence="6">
    <location>
        <begin position="443"/>
        <end position="447"/>
    </location>
</feature>
<feature type="strand" evidence="6">
    <location>
        <begin position="450"/>
        <end position="455"/>
    </location>
</feature>
<feature type="strand" evidence="6">
    <location>
        <begin position="459"/>
        <end position="463"/>
    </location>
</feature>
<gene>
    <name type="primary">amyE</name>
    <name type="synonym">amyA</name>
    <name type="ordered locus">BSU03040</name>
</gene>
<sequence>MFAKRFKTSLLPLFAGFLLLFHLVLAGPAAASAETANKSNELTAPSIKSGTILHAWNWSFNTLKHNMKDIHDAGYTAIQTSPINQVKEGNQGDKSMSNWYWLYQPTSYQIGNRYLGTEQEFKEMCAAAEEYGIKVIVDAVINHTTSDYAAISNEVKSIPNWTHGNTQIKNWSDRWDVTQNSLLGLYDWNTQNTQVQSYLKRFLDRALNDGADGFRFDAAKHIELPDDGSYGSQFWPNITNTSAEFQYGEILQDSASRDAAYANYMDVTASNYGHSIRSALKNRNLGVSNISHYASDVSADKLVTWVESHDTYANDDEESTWMSDDDIRLGWAVIASRSGSTPLFFSRPEGGGNGVRFPGKSQIGDRGSALFEDQAITAVNRFHNVMAGQPEELSNPNGNNQIFMNQRGSHGVVLANAGSSSVSINTATKLPDGRYDNKAGAGSFQVNDGKLTGTINARSVAVLYPDDIAKAPHVFLENYKTGVTHSFNDQLTITLRADANTTKAVYQINNGPETAFKDGDQFTIGKGDPFGKTYTIMLKGTNSDGVTRTEKYSFVKRDPASAKTIGYQNPNHWSQVNAYIYKHDGSRVIELTGSWPGKPMTKNADGIYTLTLPADTDTTNAKVIFNNGSAQVPGQNQPGFDYVLNGLYNDSGLSGSLPH</sequence>
<accession>P00691</accession>
<comment type="catalytic activity">
    <reaction evidence="1">
        <text>Endohydrolysis of (1-&gt;4)-alpha-D-glucosidic linkages in polysaccharides containing three or more (1-&gt;4)-alpha-linked D-glucose units.</text>
        <dbReference type="EC" id="3.2.1.1"/>
    </reaction>
</comment>
<comment type="cofactor">
    <cofactor evidence="2">
        <name>Ca(2+)</name>
        <dbReference type="ChEBI" id="CHEBI:29108"/>
    </cofactor>
    <text evidence="2">Binds 2 calcium ions per subunit.</text>
</comment>
<comment type="subunit">
    <text>Monomer.</text>
</comment>
<comment type="subcellular location">
    <subcellularLocation>
        <location evidence="3">Secreted</location>
    </subcellularLocation>
</comment>
<comment type="similarity">
    <text evidence="3">Belongs to the glycosyl hydrolase 13 family.</text>
</comment>